<sequence>MRTLTVHYLGQIAYTAAWDIQRQLAAERSRGQIGDTLLLLEHPPTITLGNKARPDHVLASPAELAARGVAVVQSDRGGEVTYHAPGQLVAYPIFKLSQHGSDVGRYVRGLEESVIRVLAGYGLVGERVAGLTGVWVRNGAAKICAIGVKLSASGVTTHGLALNVDPDLSGFDLIVPCGITDRSVTSLAFELGQAPALAEVAERLIAQIGEVFALEPRVEALAM</sequence>
<name>LIPB_CHLSY</name>
<accession>B9LM66</accession>
<gene>
    <name evidence="1" type="primary">lipB</name>
    <name type="ordered locus">Chy400_3071</name>
</gene>
<feature type="chain" id="PRO_1000116541" description="Octanoyltransferase">
    <location>
        <begin position="1"/>
        <end position="223"/>
    </location>
</feature>
<feature type="domain" description="BPL/LPL catalytic" evidence="2">
    <location>
        <begin position="31"/>
        <end position="216"/>
    </location>
</feature>
<feature type="active site" description="Acyl-thioester intermediate" evidence="1">
    <location>
        <position position="177"/>
    </location>
</feature>
<feature type="binding site" evidence="1">
    <location>
        <begin position="76"/>
        <end position="83"/>
    </location>
    <ligand>
        <name>substrate</name>
    </ligand>
</feature>
<feature type="binding site" evidence="1">
    <location>
        <begin position="145"/>
        <end position="147"/>
    </location>
    <ligand>
        <name>substrate</name>
    </ligand>
</feature>
<feature type="binding site" evidence="1">
    <location>
        <begin position="159"/>
        <end position="161"/>
    </location>
    <ligand>
        <name>substrate</name>
    </ligand>
</feature>
<feature type="site" description="Lowers pKa of active site Cys" evidence="1">
    <location>
        <position position="142"/>
    </location>
</feature>
<keyword id="KW-0012">Acyltransferase</keyword>
<keyword id="KW-0963">Cytoplasm</keyword>
<keyword id="KW-0808">Transferase</keyword>
<proteinExistence type="inferred from homology"/>
<comment type="function">
    <text evidence="1">Catalyzes the transfer of endogenously produced octanoic acid from octanoyl-acyl-carrier-protein onto the lipoyl domains of lipoate-dependent enzymes. Lipoyl-ACP can also act as a substrate although octanoyl-ACP is likely to be the physiological substrate.</text>
</comment>
<comment type="catalytic activity">
    <reaction evidence="1">
        <text>octanoyl-[ACP] + L-lysyl-[protein] = N(6)-octanoyl-L-lysyl-[protein] + holo-[ACP] + H(+)</text>
        <dbReference type="Rhea" id="RHEA:17665"/>
        <dbReference type="Rhea" id="RHEA-COMP:9636"/>
        <dbReference type="Rhea" id="RHEA-COMP:9685"/>
        <dbReference type="Rhea" id="RHEA-COMP:9752"/>
        <dbReference type="Rhea" id="RHEA-COMP:9928"/>
        <dbReference type="ChEBI" id="CHEBI:15378"/>
        <dbReference type="ChEBI" id="CHEBI:29969"/>
        <dbReference type="ChEBI" id="CHEBI:64479"/>
        <dbReference type="ChEBI" id="CHEBI:78463"/>
        <dbReference type="ChEBI" id="CHEBI:78809"/>
        <dbReference type="EC" id="2.3.1.181"/>
    </reaction>
</comment>
<comment type="pathway">
    <text evidence="1">Protein modification; protein lipoylation via endogenous pathway; protein N(6)-(lipoyl)lysine from octanoyl-[acyl-carrier-protein]: step 1/2.</text>
</comment>
<comment type="subcellular location">
    <subcellularLocation>
        <location evidence="1">Cytoplasm</location>
    </subcellularLocation>
</comment>
<comment type="miscellaneous">
    <text evidence="1">In the reaction, the free carboxyl group of octanoic acid is attached via an amide linkage to the epsilon-amino group of a specific lysine residue of lipoyl domains of lipoate-dependent enzymes.</text>
</comment>
<comment type="similarity">
    <text evidence="1">Belongs to the LipB family.</text>
</comment>
<protein>
    <recommendedName>
        <fullName evidence="1">Octanoyltransferase</fullName>
        <ecNumber evidence="1">2.3.1.181</ecNumber>
    </recommendedName>
    <alternativeName>
        <fullName evidence="1">Lipoate-protein ligase B</fullName>
    </alternativeName>
    <alternativeName>
        <fullName evidence="1">Lipoyl/octanoyl transferase</fullName>
    </alternativeName>
    <alternativeName>
        <fullName evidence="1">Octanoyl-[acyl-carrier-protein]-protein N-octanoyltransferase</fullName>
    </alternativeName>
</protein>
<reference key="1">
    <citation type="submission" date="2009-01" db="EMBL/GenBank/DDBJ databases">
        <title>Complete sequence of Chloroflexus sp. Y-400-fl.</title>
        <authorList>
            <consortium name="US DOE Joint Genome Institute"/>
            <person name="Lucas S."/>
            <person name="Copeland A."/>
            <person name="Lapidus A."/>
            <person name="Glavina del Rio T."/>
            <person name="Dalin E."/>
            <person name="Tice H."/>
            <person name="Bruce D."/>
            <person name="Goodwin L."/>
            <person name="Pitluck S."/>
            <person name="Sims D."/>
            <person name="Kiss H."/>
            <person name="Brettin T."/>
            <person name="Detter J.C."/>
            <person name="Han C."/>
            <person name="Larimer F."/>
            <person name="Land M."/>
            <person name="Hauser L."/>
            <person name="Kyrpides N."/>
            <person name="Ovchinnikova G."/>
            <person name="Bryant D.A."/>
            <person name="Richardson P."/>
        </authorList>
    </citation>
    <scope>NUCLEOTIDE SEQUENCE [LARGE SCALE GENOMIC DNA]</scope>
    <source>
        <strain>ATCC 29364 / DSM 637 / Y-400-fl</strain>
    </source>
</reference>
<organism>
    <name type="scientific">Chloroflexus aurantiacus (strain ATCC 29364 / DSM 637 / Y-400-fl)</name>
    <dbReference type="NCBI Taxonomy" id="480224"/>
    <lineage>
        <taxon>Bacteria</taxon>
        <taxon>Bacillati</taxon>
        <taxon>Chloroflexota</taxon>
        <taxon>Chloroflexia</taxon>
        <taxon>Chloroflexales</taxon>
        <taxon>Chloroflexineae</taxon>
        <taxon>Chloroflexaceae</taxon>
        <taxon>Chloroflexus</taxon>
    </lineage>
</organism>
<dbReference type="EC" id="2.3.1.181" evidence="1"/>
<dbReference type="EMBL" id="CP001364">
    <property type="protein sequence ID" value="ACM54450.1"/>
    <property type="molecule type" value="Genomic_DNA"/>
</dbReference>
<dbReference type="SMR" id="B9LM66"/>
<dbReference type="KEGG" id="chl:Chy400_3071"/>
<dbReference type="HOGENOM" id="CLU_035168_1_3_0"/>
<dbReference type="OrthoDB" id="9787061at2"/>
<dbReference type="UniPathway" id="UPA00538">
    <property type="reaction ID" value="UER00592"/>
</dbReference>
<dbReference type="GO" id="GO:0005737">
    <property type="term" value="C:cytoplasm"/>
    <property type="evidence" value="ECO:0007669"/>
    <property type="project" value="UniProtKB-SubCell"/>
</dbReference>
<dbReference type="GO" id="GO:0033819">
    <property type="term" value="F:lipoyl(octanoyl) transferase activity"/>
    <property type="evidence" value="ECO:0007669"/>
    <property type="project" value="UniProtKB-EC"/>
</dbReference>
<dbReference type="GO" id="GO:0036211">
    <property type="term" value="P:protein modification process"/>
    <property type="evidence" value="ECO:0007669"/>
    <property type="project" value="InterPro"/>
</dbReference>
<dbReference type="CDD" id="cd16444">
    <property type="entry name" value="LipB"/>
    <property type="match status" value="1"/>
</dbReference>
<dbReference type="FunFam" id="3.30.930.10:FF:000189">
    <property type="entry name" value="Octanoyltransferase"/>
    <property type="match status" value="1"/>
</dbReference>
<dbReference type="Gene3D" id="3.30.930.10">
    <property type="entry name" value="Bira Bifunctional Protein, Domain 2"/>
    <property type="match status" value="1"/>
</dbReference>
<dbReference type="HAMAP" id="MF_00013">
    <property type="entry name" value="LipB"/>
    <property type="match status" value="1"/>
</dbReference>
<dbReference type="InterPro" id="IPR045864">
    <property type="entry name" value="aa-tRNA-synth_II/BPL/LPL"/>
</dbReference>
<dbReference type="InterPro" id="IPR004143">
    <property type="entry name" value="BPL_LPL_catalytic"/>
</dbReference>
<dbReference type="InterPro" id="IPR000544">
    <property type="entry name" value="Octanoyltransferase"/>
</dbReference>
<dbReference type="InterPro" id="IPR020605">
    <property type="entry name" value="Octanoyltransferase_CS"/>
</dbReference>
<dbReference type="NCBIfam" id="TIGR00214">
    <property type="entry name" value="lipB"/>
    <property type="match status" value="1"/>
</dbReference>
<dbReference type="NCBIfam" id="NF010925">
    <property type="entry name" value="PRK14345.1"/>
    <property type="match status" value="1"/>
</dbReference>
<dbReference type="PANTHER" id="PTHR10993:SF7">
    <property type="entry name" value="LIPOYLTRANSFERASE 2, MITOCHONDRIAL-RELATED"/>
    <property type="match status" value="1"/>
</dbReference>
<dbReference type="PANTHER" id="PTHR10993">
    <property type="entry name" value="OCTANOYLTRANSFERASE"/>
    <property type="match status" value="1"/>
</dbReference>
<dbReference type="Pfam" id="PF21948">
    <property type="entry name" value="LplA-B_cat"/>
    <property type="match status" value="1"/>
</dbReference>
<dbReference type="PIRSF" id="PIRSF016262">
    <property type="entry name" value="LPLase"/>
    <property type="match status" value="1"/>
</dbReference>
<dbReference type="SUPFAM" id="SSF55681">
    <property type="entry name" value="Class II aaRS and biotin synthetases"/>
    <property type="match status" value="1"/>
</dbReference>
<dbReference type="PROSITE" id="PS51733">
    <property type="entry name" value="BPL_LPL_CATALYTIC"/>
    <property type="match status" value="1"/>
</dbReference>
<dbReference type="PROSITE" id="PS01313">
    <property type="entry name" value="LIPB"/>
    <property type="match status" value="1"/>
</dbReference>
<evidence type="ECO:0000255" key="1">
    <source>
        <dbReference type="HAMAP-Rule" id="MF_00013"/>
    </source>
</evidence>
<evidence type="ECO:0000255" key="2">
    <source>
        <dbReference type="PROSITE-ProRule" id="PRU01067"/>
    </source>
</evidence>